<reference key="1">
    <citation type="journal article" date="2008" name="Genomics">
        <title>Characterization of ST-4821 complex, a unique Neisseria meningitidis clone.</title>
        <authorList>
            <person name="Peng J."/>
            <person name="Yang L."/>
            <person name="Yang F."/>
            <person name="Yang J."/>
            <person name="Yan Y."/>
            <person name="Nie H."/>
            <person name="Zhang X."/>
            <person name="Xiong Z."/>
            <person name="Jiang Y."/>
            <person name="Cheng F."/>
            <person name="Xu X."/>
            <person name="Chen S."/>
            <person name="Sun L."/>
            <person name="Li W."/>
            <person name="Shen Y."/>
            <person name="Shao Z."/>
            <person name="Liang X."/>
            <person name="Xu J."/>
            <person name="Jin Q."/>
        </authorList>
    </citation>
    <scope>NUCLEOTIDE SEQUENCE [LARGE SCALE GENOMIC DNA]</scope>
    <source>
        <strain>053442</strain>
    </source>
</reference>
<keyword id="KW-0004">4Fe-4S</keyword>
<keyword id="KW-0067">ATP-binding</keyword>
<keyword id="KW-0963">Cytoplasm</keyword>
<keyword id="KW-0408">Iron</keyword>
<keyword id="KW-0411">Iron-sulfur</keyword>
<keyword id="KW-0460">Magnesium</keyword>
<keyword id="KW-0479">Metal-binding</keyword>
<keyword id="KW-0547">Nucleotide-binding</keyword>
<keyword id="KW-0694">RNA-binding</keyword>
<keyword id="KW-0808">Transferase</keyword>
<keyword id="KW-0819">tRNA processing</keyword>
<keyword id="KW-0820">tRNA-binding</keyword>
<gene>
    <name evidence="1" type="primary">ttcA</name>
    <name type="ordered locus">NMCC_1172</name>
</gene>
<protein>
    <recommendedName>
        <fullName evidence="1">tRNA-cytidine(32) 2-sulfurtransferase</fullName>
        <ecNumber evidence="1">2.8.1.-</ecNumber>
    </recommendedName>
    <alternativeName>
        <fullName evidence="1">Two-thiocytidine biosynthesis protein A</fullName>
    </alternativeName>
    <alternativeName>
        <fullName evidence="1">tRNA 2-thiocytidine biosynthesis protein TtcA</fullName>
    </alternativeName>
</protein>
<name>TTCA_NEIM0</name>
<accession>A9LZH0</accession>
<organism>
    <name type="scientific">Neisseria meningitidis serogroup C (strain 053442)</name>
    <dbReference type="NCBI Taxonomy" id="374833"/>
    <lineage>
        <taxon>Bacteria</taxon>
        <taxon>Pseudomonadati</taxon>
        <taxon>Pseudomonadota</taxon>
        <taxon>Betaproteobacteria</taxon>
        <taxon>Neisseriales</taxon>
        <taxon>Neisseriaceae</taxon>
        <taxon>Neisseria</taxon>
    </lineage>
</organism>
<proteinExistence type="inferred from homology"/>
<comment type="function">
    <text evidence="1">Catalyzes the ATP-dependent 2-thiolation of cytidine in position 32 of tRNA, to form 2-thiocytidine (s(2)C32). The sulfur atoms are provided by the cysteine/cysteine desulfurase (IscS) system.</text>
</comment>
<comment type="catalytic activity">
    <reaction evidence="1">
        <text>cytidine(32) in tRNA + S-sulfanyl-L-cysteinyl-[cysteine desulfurase] + AH2 + ATP = 2-thiocytidine(32) in tRNA + L-cysteinyl-[cysteine desulfurase] + A + AMP + diphosphate + H(+)</text>
        <dbReference type="Rhea" id="RHEA:57048"/>
        <dbReference type="Rhea" id="RHEA-COMP:10288"/>
        <dbReference type="Rhea" id="RHEA-COMP:12157"/>
        <dbReference type="Rhea" id="RHEA-COMP:12158"/>
        <dbReference type="Rhea" id="RHEA-COMP:14821"/>
        <dbReference type="ChEBI" id="CHEBI:13193"/>
        <dbReference type="ChEBI" id="CHEBI:15378"/>
        <dbReference type="ChEBI" id="CHEBI:17499"/>
        <dbReference type="ChEBI" id="CHEBI:29950"/>
        <dbReference type="ChEBI" id="CHEBI:30616"/>
        <dbReference type="ChEBI" id="CHEBI:33019"/>
        <dbReference type="ChEBI" id="CHEBI:61963"/>
        <dbReference type="ChEBI" id="CHEBI:82748"/>
        <dbReference type="ChEBI" id="CHEBI:141453"/>
        <dbReference type="ChEBI" id="CHEBI:456215"/>
    </reaction>
    <physiologicalReaction direction="left-to-right" evidence="1">
        <dbReference type="Rhea" id="RHEA:57049"/>
    </physiologicalReaction>
</comment>
<comment type="cofactor">
    <cofactor evidence="1">
        <name>Mg(2+)</name>
        <dbReference type="ChEBI" id="CHEBI:18420"/>
    </cofactor>
</comment>
<comment type="cofactor">
    <cofactor evidence="1">
        <name>[4Fe-4S] cluster</name>
        <dbReference type="ChEBI" id="CHEBI:49883"/>
    </cofactor>
    <text evidence="1">Binds 1 [4Fe-4S] cluster per subunit. The cluster is chelated by three Cys residues, the fourth Fe has a free coordination site that may bind a sulfur atom transferred from the persulfide of IscS.</text>
</comment>
<comment type="pathway">
    <text evidence="1">tRNA modification.</text>
</comment>
<comment type="subunit">
    <text evidence="1">Homodimer.</text>
</comment>
<comment type="subcellular location">
    <subcellularLocation>
        <location evidence="1">Cytoplasm</location>
    </subcellularLocation>
</comment>
<comment type="miscellaneous">
    <text evidence="1">The thiolation reaction likely consists of two steps: a first activation step by ATP to form an adenylated intermediate of the target base of tRNA, and a second nucleophilic substitution step of the sulfur (S) atom supplied by the hydrosulfide attached to the Fe-S cluster.</text>
</comment>
<comment type="similarity">
    <text evidence="1">Belongs to the TtcA family.</text>
</comment>
<comment type="sequence caution" evidence="2">
    <conflict type="erroneous initiation">
        <sequence resource="EMBL-CDS" id="ABX73346"/>
    </conflict>
    <text>Truncated N-terminus.</text>
</comment>
<feature type="chain" id="PRO_0000348773" description="tRNA-cytidine(32) 2-sulfurtransferase">
    <location>
        <begin position="1"/>
        <end position="319"/>
    </location>
</feature>
<feature type="short sequence motif" description="PP-loop motif" evidence="1">
    <location>
        <begin position="43"/>
        <end position="48"/>
    </location>
</feature>
<feature type="binding site" evidence="1">
    <location>
        <position position="118"/>
    </location>
    <ligand>
        <name>[4Fe-4S] cluster</name>
        <dbReference type="ChEBI" id="CHEBI:49883"/>
    </ligand>
</feature>
<feature type="binding site" evidence="1">
    <location>
        <position position="121"/>
    </location>
    <ligand>
        <name>[4Fe-4S] cluster</name>
        <dbReference type="ChEBI" id="CHEBI:49883"/>
    </ligand>
</feature>
<feature type="binding site" evidence="1">
    <location>
        <position position="209"/>
    </location>
    <ligand>
        <name>[4Fe-4S] cluster</name>
        <dbReference type="ChEBI" id="CHEBI:49883"/>
    </ligand>
</feature>
<sequence length="319" mass="35814">MSKKTKQELENNKLSKRLRHAVGDAINDFNMIEPGDKIMVCLSGGKDSYALLDILRQLQASAPIDFELVAVNLDQKQPGFPEEVLPTYLESIGVPYKIVEEDTYSTVKRVLDEGKTTCSLCSRLRRGILYRTAKELGCTKIALGHHRDDILATMFLNMFYGGKLKAMPPKLVSDNGEHIVIRPLAYVKEKDLIKYAELKQFPIIPCNLCGSQPNLQRQVIGDMLRDWDKRFPGRIESMFSALQNVVPSHLADTELFDFAGLERGQTLKHGGDLAFDSEKMPERFSDGSEEDESEIKIAPQKAERKVINILANKPKTCGA</sequence>
<evidence type="ECO:0000255" key="1">
    <source>
        <dbReference type="HAMAP-Rule" id="MF_01850"/>
    </source>
</evidence>
<evidence type="ECO:0000305" key="2"/>
<dbReference type="EC" id="2.8.1.-" evidence="1"/>
<dbReference type="EMBL" id="CP000381">
    <property type="protein sequence ID" value="ABX73346.1"/>
    <property type="status" value="ALT_INIT"/>
    <property type="molecule type" value="Genomic_DNA"/>
</dbReference>
<dbReference type="RefSeq" id="WP_002235844.1">
    <property type="nucleotide sequence ID" value="NC_010120.1"/>
</dbReference>
<dbReference type="SMR" id="A9LZH0"/>
<dbReference type="KEGG" id="nmn:NMCC_1172"/>
<dbReference type="HOGENOM" id="CLU_026481_0_0_4"/>
<dbReference type="Proteomes" id="UP000001177">
    <property type="component" value="Chromosome"/>
</dbReference>
<dbReference type="GO" id="GO:0005737">
    <property type="term" value="C:cytoplasm"/>
    <property type="evidence" value="ECO:0007669"/>
    <property type="project" value="UniProtKB-SubCell"/>
</dbReference>
<dbReference type="GO" id="GO:0051539">
    <property type="term" value="F:4 iron, 4 sulfur cluster binding"/>
    <property type="evidence" value="ECO:0007669"/>
    <property type="project" value="UniProtKB-UniRule"/>
</dbReference>
<dbReference type="GO" id="GO:0005524">
    <property type="term" value="F:ATP binding"/>
    <property type="evidence" value="ECO:0007669"/>
    <property type="project" value="UniProtKB-UniRule"/>
</dbReference>
<dbReference type="GO" id="GO:0000287">
    <property type="term" value="F:magnesium ion binding"/>
    <property type="evidence" value="ECO:0007669"/>
    <property type="project" value="UniProtKB-UniRule"/>
</dbReference>
<dbReference type="GO" id="GO:0016783">
    <property type="term" value="F:sulfurtransferase activity"/>
    <property type="evidence" value="ECO:0007669"/>
    <property type="project" value="UniProtKB-UniRule"/>
</dbReference>
<dbReference type="GO" id="GO:0000049">
    <property type="term" value="F:tRNA binding"/>
    <property type="evidence" value="ECO:0007669"/>
    <property type="project" value="UniProtKB-KW"/>
</dbReference>
<dbReference type="GO" id="GO:0034227">
    <property type="term" value="P:tRNA thio-modification"/>
    <property type="evidence" value="ECO:0007669"/>
    <property type="project" value="UniProtKB-UniRule"/>
</dbReference>
<dbReference type="CDD" id="cd24138">
    <property type="entry name" value="TtcA-like"/>
    <property type="match status" value="1"/>
</dbReference>
<dbReference type="Gene3D" id="3.40.50.620">
    <property type="entry name" value="HUPs"/>
    <property type="match status" value="1"/>
</dbReference>
<dbReference type="HAMAP" id="MF_01850">
    <property type="entry name" value="TtcA"/>
    <property type="match status" value="1"/>
</dbReference>
<dbReference type="InterPro" id="IPR014729">
    <property type="entry name" value="Rossmann-like_a/b/a_fold"/>
</dbReference>
<dbReference type="InterPro" id="IPR011063">
    <property type="entry name" value="TilS/TtcA_N"/>
</dbReference>
<dbReference type="InterPro" id="IPR012089">
    <property type="entry name" value="tRNA_Cyd_32_2_STrfase"/>
</dbReference>
<dbReference type="InterPro" id="IPR035107">
    <property type="entry name" value="tRNA_thiolation_TtcA_Ctu1"/>
</dbReference>
<dbReference type="NCBIfam" id="NF007972">
    <property type="entry name" value="PRK10696.1"/>
    <property type="match status" value="1"/>
</dbReference>
<dbReference type="PANTHER" id="PTHR43686:SF1">
    <property type="entry name" value="AMINOTRAN_5 DOMAIN-CONTAINING PROTEIN"/>
    <property type="match status" value="1"/>
</dbReference>
<dbReference type="PANTHER" id="PTHR43686">
    <property type="entry name" value="SULFURTRANSFERASE-RELATED"/>
    <property type="match status" value="1"/>
</dbReference>
<dbReference type="Pfam" id="PF01171">
    <property type="entry name" value="ATP_bind_3"/>
    <property type="match status" value="1"/>
</dbReference>
<dbReference type="PIRSF" id="PIRSF004976">
    <property type="entry name" value="ATPase_YdaO"/>
    <property type="match status" value="1"/>
</dbReference>
<dbReference type="SUPFAM" id="SSF52402">
    <property type="entry name" value="Adenine nucleotide alpha hydrolases-like"/>
    <property type="match status" value="1"/>
</dbReference>